<proteinExistence type="inferred from homology"/>
<keyword id="KW-0328">Glycosyltransferase</keyword>
<keyword id="KW-0479">Metal-binding</keyword>
<keyword id="KW-0671">Queuosine biosynthesis</keyword>
<keyword id="KW-0808">Transferase</keyword>
<keyword id="KW-0819">tRNA processing</keyword>
<keyword id="KW-0862">Zinc</keyword>
<accession>Q9JVA4</accession>
<accession>A1IQX1</accession>
<protein>
    <recommendedName>
        <fullName evidence="1">Queuine tRNA-ribosyltransferase</fullName>
        <ecNumber evidence="1">2.4.2.29</ecNumber>
    </recommendedName>
    <alternativeName>
        <fullName evidence="1">Guanine insertion enzyme</fullName>
    </alternativeName>
    <alternativeName>
        <fullName evidence="1">tRNA-guanine transglycosylase</fullName>
    </alternativeName>
</protein>
<name>TGT_NEIMA</name>
<dbReference type="EC" id="2.4.2.29" evidence="1"/>
<dbReference type="EMBL" id="AL157959">
    <property type="protein sequence ID" value="CAM08155.1"/>
    <property type="molecule type" value="Genomic_DNA"/>
</dbReference>
<dbReference type="PIR" id="A81939">
    <property type="entry name" value="A81939"/>
</dbReference>
<dbReference type="RefSeq" id="WP_002246070.1">
    <property type="nucleotide sequence ID" value="NC_003116.1"/>
</dbReference>
<dbReference type="SMR" id="Q9JVA4"/>
<dbReference type="EnsemblBacteria" id="CAM08155">
    <property type="protein sequence ID" value="CAM08155"/>
    <property type="gene ID" value="NMA0928"/>
</dbReference>
<dbReference type="GeneID" id="93386456"/>
<dbReference type="KEGG" id="nma:NMA0928"/>
<dbReference type="HOGENOM" id="CLU_022060_0_1_4"/>
<dbReference type="UniPathway" id="UPA00392"/>
<dbReference type="Proteomes" id="UP000000626">
    <property type="component" value="Chromosome"/>
</dbReference>
<dbReference type="GO" id="GO:0005829">
    <property type="term" value="C:cytosol"/>
    <property type="evidence" value="ECO:0007669"/>
    <property type="project" value="TreeGrafter"/>
</dbReference>
<dbReference type="GO" id="GO:0046872">
    <property type="term" value="F:metal ion binding"/>
    <property type="evidence" value="ECO:0007669"/>
    <property type="project" value="UniProtKB-KW"/>
</dbReference>
<dbReference type="GO" id="GO:0008479">
    <property type="term" value="F:tRNA-guanosine(34) queuine transglycosylase activity"/>
    <property type="evidence" value="ECO:0007669"/>
    <property type="project" value="UniProtKB-UniRule"/>
</dbReference>
<dbReference type="GO" id="GO:0008616">
    <property type="term" value="P:queuosine biosynthetic process"/>
    <property type="evidence" value="ECO:0007669"/>
    <property type="project" value="UniProtKB-UniRule"/>
</dbReference>
<dbReference type="GO" id="GO:0002099">
    <property type="term" value="P:tRNA wobble guanine modification"/>
    <property type="evidence" value="ECO:0007669"/>
    <property type="project" value="TreeGrafter"/>
</dbReference>
<dbReference type="GO" id="GO:0101030">
    <property type="term" value="P:tRNA-guanine transglycosylation"/>
    <property type="evidence" value="ECO:0007669"/>
    <property type="project" value="InterPro"/>
</dbReference>
<dbReference type="FunFam" id="3.20.20.105:FF:000001">
    <property type="entry name" value="Queuine tRNA-ribosyltransferase"/>
    <property type="match status" value="1"/>
</dbReference>
<dbReference type="Gene3D" id="3.20.20.105">
    <property type="entry name" value="Queuine tRNA-ribosyltransferase-like"/>
    <property type="match status" value="1"/>
</dbReference>
<dbReference type="HAMAP" id="MF_00168">
    <property type="entry name" value="Q_tRNA_Tgt"/>
    <property type="match status" value="1"/>
</dbReference>
<dbReference type="InterPro" id="IPR050076">
    <property type="entry name" value="ArchSynthase1/Queuine_TRR"/>
</dbReference>
<dbReference type="InterPro" id="IPR004803">
    <property type="entry name" value="TGT"/>
</dbReference>
<dbReference type="InterPro" id="IPR036511">
    <property type="entry name" value="TGT-like_sf"/>
</dbReference>
<dbReference type="InterPro" id="IPR002616">
    <property type="entry name" value="tRNA_ribo_trans-like"/>
</dbReference>
<dbReference type="NCBIfam" id="TIGR00430">
    <property type="entry name" value="Q_tRNA_tgt"/>
    <property type="match status" value="1"/>
</dbReference>
<dbReference type="NCBIfam" id="TIGR00449">
    <property type="entry name" value="tgt_general"/>
    <property type="match status" value="1"/>
</dbReference>
<dbReference type="PANTHER" id="PTHR46499">
    <property type="entry name" value="QUEUINE TRNA-RIBOSYLTRANSFERASE"/>
    <property type="match status" value="1"/>
</dbReference>
<dbReference type="PANTHER" id="PTHR46499:SF1">
    <property type="entry name" value="QUEUINE TRNA-RIBOSYLTRANSFERASE"/>
    <property type="match status" value="1"/>
</dbReference>
<dbReference type="Pfam" id="PF01702">
    <property type="entry name" value="TGT"/>
    <property type="match status" value="1"/>
</dbReference>
<dbReference type="SUPFAM" id="SSF51713">
    <property type="entry name" value="tRNA-guanine transglycosylase"/>
    <property type="match status" value="1"/>
</dbReference>
<comment type="function">
    <text evidence="1">Catalyzes the base-exchange of a guanine (G) residue with the queuine precursor 7-aminomethyl-7-deazaguanine (PreQ1) at position 34 (anticodon wobble position) in tRNAs with GU(N) anticodons (tRNA-Asp, -Asn, -His and -Tyr). Catalysis occurs through a double-displacement mechanism. The nucleophile active site attacks the C1' of nucleotide 34 to detach the guanine base from the RNA, forming a covalent enzyme-RNA intermediate. The proton acceptor active site deprotonates the incoming PreQ1, allowing a nucleophilic attack on the C1' of the ribose to form the product. After dissociation, two additional enzymatic reactions on the tRNA convert PreQ1 to queuine (Q), resulting in the hypermodified nucleoside queuosine (7-(((4,5-cis-dihydroxy-2-cyclopenten-1-yl)amino)methyl)-7-deazaguanosine).</text>
</comment>
<comment type="catalytic activity">
    <reaction evidence="1">
        <text>7-aminomethyl-7-carbaguanine + guanosine(34) in tRNA = 7-aminomethyl-7-carbaguanosine(34) in tRNA + guanine</text>
        <dbReference type="Rhea" id="RHEA:24104"/>
        <dbReference type="Rhea" id="RHEA-COMP:10341"/>
        <dbReference type="Rhea" id="RHEA-COMP:10342"/>
        <dbReference type="ChEBI" id="CHEBI:16235"/>
        <dbReference type="ChEBI" id="CHEBI:58703"/>
        <dbReference type="ChEBI" id="CHEBI:74269"/>
        <dbReference type="ChEBI" id="CHEBI:82833"/>
        <dbReference type="EC" id="2.4.2.29"/>
    </reaction>
</comment>
<comment type="cofactor">
    <cofactor evidence="1">
        <name>Zn(2+)</name>
        <dbReference type="ChEBI" id="CHEBI:29105"/>
    </cofactor>
    <text evidence="1">Binds 1 zinc ion per subunit.</text>
</comment>
<comment type="pathway">
    <text evidence="1">tRNA modification; tRNA-queuosine biosynthesis.</text>
</comment>
<comment type="subunit">
    <text evidence="1">Homodimer. Within each dimer, one monomer is responsible for RNA recognition and catalysis, while the other monomer binds to the replacement base PreQ1.</text>
</comment>
<comment type="similarity">
    <text evidence="1">Belongs to the queuine tRNA-ribosyltransferase family.</text>
</comment>
<sequence length="371" mass="41934">MLKFTLHKKDGYARRGTLELNHGKIETPVFMPVGTYGSVKAMNPQNLHDIKAQIILGNTYHLWLRPGLEVVEQFGGLHGFIGWDKPILTDSGGFQVFSLSDMRKLTEEGCTFKSPINGDKLFLSPEISMKIQTVLNSDIAMQLDECTPGEATREQARKSLQMSLRWAERSKKAFEDLKNPNALFGIVQGAMYEDLREESLKGLEELDFPGLAIGGLSVGEPKPEMYRMLRAVGPILPEHKPHYLMGVGTPEDLVYGVAHGVDMFDCVMPTRNARNGWLFTRFGDLKIKNAKHKLDKRPIDESCTCYACQNFSRAYLHHLHRAGEILGAQLNTIHNLHFYQVIMAEMREAVEQGKFADWQAQFHENRARGTD</sequence>
<gene>
    <name evidence="1" type="primary">tgt</name>
    <name type="ordered locus">NMA0928</name>
</gene>
<feature type="chain" id="PRO_0000135495" description="Queuine tRNA-ribosyltransferase">
    <location>
        <begin position="1"/>
        <end position="371"/>
    </location>
</feature>
<feature type="region of interest" description="RNA binding" evidence="1">
    <location>
        <begin position="246"/>
        <end position="252"/>
    </location>
</feature>
<feature type="region of interest" description="RNA binding; important for wobble base 34 recognition" evidence="1">
    <location>
        <begin position="270"/>
        <end position="274"/>
    </location>
</feature>
<feature type="active site" description="Proton acceptor" evidence="1">
    <location>
        <position position="90"/>
    </location>
</feature>
<feature type="active site" description="Nucleophile" evidence="1">
    <location>
        <position position="265"/>
    </location>
</feature>
<feature type="binding site" evidence="1">
    <location>
        <begin position="90"/>
        <end position="94"/>
    </location>
    <ligand>
        <name>substrate</name>
    </ligand>
</feature>
<feature type="binding site" evidence="1">
    <location>
        <position position="144"/>
    </location>
    <ligand>
        <name>substrate</name>
    </ligand>
</feature>
<feature type="binding site" evidence="1">
    <location>
        <position position="188"/>
    </location>
    <ligand>
        <name>substrate</name>
    </ligand>
</feature>
<feature type="binding site" evidence="1">
    <location>
        <position position="215"/>
    </location>
    <ligand>
        <name>substrate</name>
    </ligand>
</feature>
<feature type="binding site" evidence="1">
    <location>
        <position position="303"/>
    </location>
    <ligand>
        <name>Zn(2+)</name>
        <dbReference type="ChEBI" id="CHEBI:29105"/>
    </ligand>
</feature>
<feature type="binding site" evidence="1">
    <location>
        <position position="305"/>
    </location>
    <ligand>
        <name>Zn(2+)</name>
        <dbReference type="ChEBI" id="CHEBI:29105"/>
    </ligand>
</feature>
<feature type="binding site" evidence="1">
    <location>
        <position position="308"/>
    </location>
    <ligand>
        <name>Zn(2+)</name>
        <dbReference type="ChEBI" id="CHEBI:29105"/>
    </ligand>
</feature>
<feature type="binding site" evidence="1">
    <location>
        <position position="334"/>
    </location>
    <ligand>
        <name>Zn(2+)</name>
        <dbReference type="ChEBI" id="CHEBI:29105"/>
    </ligand>
</feature>
<reference key="1">
    <citation type="journal article" date="2000" name="Nature">
        <title>Complete DNA sequence of a serogroup A strain of Neisseria meningitidis Z2491.</title>
        <authorList>
            <person name="Parkhill J."/>
            <person name="Achtman M."/>
            <person name="James K.D."/>
            <person name="Bentley S.D."/>
            <person name="Churcher C.M."/>
            <person name="Klee S.R."/>
            <person name="Morelli G."/>
            <person name="Basham D."/>
            <person name="Brown D."/>
            <person name="Chillingworth T."/>
            <person name="Davies R.M."/>
            <person name="Davis P."/>
            <person name="Devlin K."/>
            <person name="Feltwell T."/>
            <person name="Hamlin N."/>
            <person name="Holroyd S."/>
            <person name="Jagels K."/>
            <person name="Leather S."/>
            <person name="Moule S."/>
            <person name="Mungall K.L."/>
            <person name="Quail M.A."/>
            <person name="Rajandream M.A."/>
            <person name="Rutherford K.M."/>
            <person name="Simmonds M."/>
            <person name="Skelton J."/>
            <person name="Whitehead S."/>
            <person name="Spratt B.G."/>
            <person name="Barrell B.G."/>
        </authorList>
    </citation>
    <scope>NUCLEOTIDE SEQUENCE [LARGE SCALE GENOMIC DNA]</scope>
    <source>
        <strain>DSM 15465 / Z2491</strain>
    </source>
</reference>
<evidence type="ECO:0000255" key="1">
    <source>
        <dbReference type="HAMAP-Rule" id="MF_00168"/>
    </source>
</evidence>
<organism>
    <name type="scientific">Neisseria meningitidis serogroup A / serotype 4A (strain DSM 15465 / Z2491)</name>
    <dbReference type="NCBI Taxonomy" id="122587"/>
    <lineage>
        <taxon>Bacteria</taxon>
        <taxon>Pseudomonadati</taxon>
        <taxon>Pseudomonadota</taxon>
        <taxon>Betaproteobacteria</taxon>
        <taxon>Neisseriales</taxon>
        <taxon>Neisseriaceae</taxon>
        <taxon>Neisseria</taxon>
    </lineage>
</organism>